<comment type="function">
    <text evidence="3">Component of the protein machinery at the inhibitory synapses, probably acting as a scaffold. Inhibitory synapses dampen neuronal activity through postsynaptic hyperpolarization. This synaptic inhibition is fundamental for the functioning of the central nervous system, shaping and orchestrating the flow of information through neuronal networks to generate a precise neural code.</text>
</comment>
<comment type="subunit">
    <text evidence="3">Interacts with GPHN.</text>
</comment>
<comment type="subcellular location">
    <subcellularLocation>
        <location evidence="3">Postsynaptic density</location>
    </subcellularLocation>
</comment>
<comment type="similarity">
    <text evidence="5">Belongs to the INSYN2 family.</text>
</comment>
<feature type="chain" id="PRO_0000329447" description="Inhibitory synaptic factor 2A">
    <location>
        <begin position="1"/>
        <end position="422"/>
    </location>
</feature>
<feature type="region of interest" description="Disordered" evidence="2">
    <location>
        <begin position="143"/>
        <end position="163"/>
    </location>
</feature>
<feature type="coiled-coil region" evidence="1">
    <location>
        <begin position="344"/>
        <end position="370"/>
    </location>
</feature>
<feature type="compositionally biased region" description="Basic and acidic residues" evidence="2">
    <location>
        <begin position="146"/>
        <end position="160"/>
    </location>
</feature>
<feature type="modified residue" description="Phosphoserine" evidence="7">
    <location>
        <position position="177"/>
    </location>
</feature>
<organism>
    <name type="scientific">Mus musculus</name>
    <name type="common">Mouse</name>
    <dbReference type="NCBI Taxonomy" id="10090"/>
    <lineage>
        <taxon>Eukaryota</taxon>
        <taxon>Metazoa</taxon>
        <taxon>Chordata</taxon>
        <taxon>Craniata</taxon>
        <taxon>Vertebrata</taxon>
        <taxon>Euteleostomi</taxon>
        <taxon>Mammalia</taxon>
        <taxon>Eutheria</taxon>
        <taxon>Euarchontoglires</taxon>
        <taxon>Glires</taxon>
        <taxon>Rodentia</taxon>
        <taxon>Myomorpha</taxon>
        <taxon>Muroidea</taxon>
        <taxon>Muridae</taxon>
        <taxon>Murinae</taxon>
        <taxon>Mus</taxon>
        <taxon>Mus</taxon>
    </lineage>
</organism>
<dbReference type="EMBL" id="AK140373">
    <property type="protein sequence ID" value="BAE24361.1"/>
    <property type="molecule type" value="mRNA"/>
</dbReference>
<dbReference type="EMBL" id="BC158077">
    <property type="protein sequence ID" value="AAI58078.1"/>
    <property type="molecule type" value="mRNA"/>
</dbReference>
<dbReference type="EMBL" id="BC158080">
    <property type="protein sequence ID" value="AAI58081.1"/>
    <property type="molecule type" value="mRNA"/>
</dbReference>
<dbReference type="SMR" id="Q3USH1"/>
<dbReference type="FunCoup" id="Q3USH1">
    <property type="interactions" value="9"/>
</dbReference>
<dbReference type="STRING" id="10090.ENSMUSP00000129222"/>
<dbReference type="GlyGen" id="Q3USH1">
    <property type="glycosylation" value="2 sites, 1 N-linked glycan (1 site)"/>
</dbReference>
<dbReference type="iPTMnet" id="Q3USH1"/>
<dbReference type="PhosphoSitePlus" id="Q3USH1"/>
<dbReference type="PaxDb" id="10090-ENSMUSP00000129222"/>
<dbReference type="ProteomicsDB" id="271829"/>
<dbReference type="UCSC" id="uc009kdz.1">
    <property type="organism name" value="mouse"/>
</dbReference>
<dbReference type="AGR" id="MGI:3605068"/>
<dbReference type="MGI" id="MGI:3605068">
    <property type="gene designation" value="Insyn2a"/>
</dbReference>
<dbReference type="eggNOG" id="ENOG502QS3U">
    <property type="taxonomic scope" value="Eukaryota"/>
</dbReference>
<dbReference type="InParanoid" id="Q3USH1"/>
<dbReference type="PhylomeDB" id="Q3USH1"/>
<dbReference type="PRO" id="PR:Q3USH1"/>
<dbReference type="Proteomes" id="UP000000589">
    <property type="component" value="Unplaced"/>
</dbReference>
<dbReference type="RNAct" id="Q3USH1">
    <property type="molecule type" value="protein"/>
</dbReference>
<dbReference type="GO" id="GO:0098982">
    <property type="term" value="C:GABA-ergic synapse"/>
    <property type="evidence" value="ECO:0000314"/>
    <property type="project" value="SynGO"/>
</dbReference>
<dbReference type="GO" id="GO:0014069">
    <property type="term" value="C:postsynaptic density"/>
    <property type="evidence" value="ECO:0000314"/>
    <property type="project" value="UniProtKB"/>
</dbReference>
<dbReference type="GO" id="GO:0099572">
    <property type="term" value="C:postsynaptic specialization"/>
    <property type="evidence" value="ECO:0000314"/>
    <property type="project" value="SynGO"/>
</dbReference>
<dbReference type="GO" id="GO:0099565">
    <property type="term" value="P:chemical synaptic transmission, postsynaptic"/>
    <property type="evidence" value="ECO:0000314"/>
    <property type="project" value="SynGO"/>
</dbReference>
<dbReference type="GO" id="GO:0060080">
    <property type="term" value="P:inhibitory postsynaptic potential"/>
    <property type="evidence" value="ECO:0000314"/>
    <property type="project" value="UniProtKB"/>
</dbReference>
<dbReference type="InterPro" id="IPR029337">
    <property type="entry name" value="INSYN2"/>
</dbReference>
<dbReference type="PANTHER" id="PTHR28682:SF1">
    <property type="entry name" value="INHIBITORY SYNAPTIC FACTOR 2A"/>
    <property type="match status" value="1"/>
</dbReference>
<dbReference type="PANTHER" id="PTHR28682">
    <property type="entry name" value="INHIBITORY SYNAPTIC FACTOR 2A-RELATED"/>
    <property type="match status" value="1"/>
</dbReference>
<dbReference type="Pfam" id="PF15265">
    <property type="entry name" value="FAM196"/>
    <property type="match status" value="1"/>
</dbReference>
<name>INSY2_MOUSE</name>
<gene>
    <name evidence="6" type="primary">Insyn2a</name>
    <name evidence="6" type="synonym">Fam196a</name>
    <name evidence="6" type="synonym">Insy2</name>
</gene>
<protein>
    <recommendedName>
        <fullName evidence="5">Inhibitory synaptic factor 2A</fullName>
        <shortName evidence="4">InSyn2</shortName>
    </recommendedName>
</protein>
<proteinExistence type="evidence at protein level"/>
<accession>Q3USH1</accession>
<accession>B2RY32</accession>
<reference key="1">
    <citation type="journal article" date="2005" name="Science">
        <title>The transcriptional landscape of the mammalian genome.</title>
        <authorList>
            <person name="Carninci P."/>
            <person name="Kasukawa T."/>
            <person name="Katayama S."/>
            <person name="Gough J."/>
            <person name="Frith M.C."/>
            <person name="Maeda N."/>
            <person name="Oyama R."/>
            <person name="Ravasi T."/>
            <person name="Lenhard B."/>
            <person name="Wells C."/>
            <person name="Kodzius R."/>
            <person name="Shimokawa K."/>
            <person name="Bajic V.B."/>
            <person name="Brenner S.E."/>
            <person name="Batalov S."/>
            <person name="Forrest A.R."/>
            <person name="Zavolan M."/>
            <person name="Davis M.J."/>
            <person name="Wilming L.G."/>
            <person name="Aidinis V."/>
            <person name="Allen J.E."/>
            <person name="Ambesi-Impiombato A."/>
            <person name="Apweiler R."/>
            <person name="Aturaliya R.N."/>
            <person name="Bailey T.L."/>
            <person name="Bansal M."/>
            <person name="Baxter L."/>
            <person name="Beisel K.W."/>
            <person name="Bersano T."/>
            <person name="Bono H."/>
            <person name="Chalk A.M."/>
            <person name="Chiu K.P."/>
            <person name="Choudhary V."/>
            <person name="Christoffels A."/>
            <person name="Clutterbuck D.R."/>
            <person name="Crowe M.L."/>
            <person name="Dalla E."/>
            <person name="Dalrymple B.P."/>
            <person name="de Bono B."/>
            <person name="Della Gatta G."/>
            <person name="di Bernardo D."/>
            <person name="Down T."/>
            <person name="Engstrom P."/>
            <person name="Fagiolini M."/>
            <person name="Faulkner G."/>
            <person name="Fletcher C.F."/>
            <person name="Fukushima T."/>
            <person name="Furuno M."/>
            <person name="Futaki S."/>
            <person name="Gariboldi M."/>
            <person name="Georgii-Hemming P."/>
            <person name="Gingeras T.R."/>
            <person name="Gojobori T."/>
            <person name="Green R.E."/>
            <person name="Gustincich S."/>
            <person name="Harbers M."/>
            <person name="Hayashi Y."/>
            <person name="Hensch T.K."/>
            <person name="Hirokawa N."/>
            <person name="Hill D."/>
            <person name="Huminiecki L."/>
            <person name="Iacono M."/>
            <person name="Ikeo K."/>
            <person name="Iwama A."/>
            <person name="Ishikawa T."/>
            <person name="Jakt M."/>
            <person name="Kanapin A."/>
            <person name="Katoh M."/>
            <person name="Kawasawa Y."/>
            <person name="Kelso J."/>
            <person name="Kitamura H."/>
            <person name="Kitano H."/>
            <person name="Kollias G."/>
            <person name="Krishnan S.P."/>
            <person name="Kruger A."/>
            <person name="Kummerfeld S.K."/>
            <person name="Kurochkin I.V."/>
            <person name="Lareau L.F."/>
            <person name="Lazarevic D."/>
            <person name="Lipovich L."/>
            <person name="Liu J."/>
            <person name="Liuni S."/>
            <person name="McWilliam S."/>
            <person name="Madan Babu M."/>
            <person name="Madera M."/>
            <person name="Marchionni L."/>
            <person name="Matsuda H."/>
            <person name="Matsuzawa S."/>
            <person name="Miki H."/>
            <person name="Mignone F."/>
            <person name="Miyake S."/>
            <person name="Morris K."/>
            <person name="Mottagui-Tabar S."/>
            <person name="Mulder N."/>
            <person name="Nakano N."/>
            <person name="Nakauchi H."/>
            <person name="Ng P."/>
            <person name="Nilsson R."/>
            <person name="Nishiguchi S."/>
            <person name="Nishikawa S."/>
            <person name="Nori F."/>
            <person name="Ohara O."/>
            <person name="Okazaki Y."/>
            <person name="Orlando V."/>
            <person name="Pang K.C."/>
            <person name="Pavan W.J."/>
            <person name="Pavesi G."/>
            <person name="Pesole G."/>
            <person name="Petrovsky N."/>
            <person name="Piazza S."/>
            <person name="Reed J."/>
            <person name="Reid J.F."/>
            <person name="Ring B.Z."/>
            <person name="Ringwald M."/>
            <person name="Rost B."/>
            <person name="Ruan Y."/>
            <person name="Salzberg S.L."/>
            <person name="Sandelin A."/>
            <person name="Schneider C."/>
            <person name="Schoenbach C."/>
            <person name="Sekiguchi K."/>
            <person name="Semple C.A."/>
            <person name="Seno S."/>
            <person name="Sessa L."/>
            <person name="Sheng Y."/>
            <person name="Shibata Y."/>
            <person name="Shimada H."/>
            <person name="Shimada K."/>
            <person name="Silva D."/>
            <person name="Sinclair B."/>
            <person name="Sperling S."/>
            <person name="Stupka E."/>
            <person name="Sugiura K."/>
            <person name="Sultana R."/>
            <person name="Takenaka Y."/>
            <person name="Taki K."/>
            <person name="Tammoja K."/>
            <person name="Tan S.L."/>
            <person name="Tang S."/>
            <person name="Taylor M.S."/>
            <person name="Tegner J."/>
            <person name="Teichmann S.A."/>
            <person name="Ueda H.R."/>
            <person name="van Nimwegen E."/>
            <person name="Verardo R."/>
            <person name="Wei C.L."/>
            <person name="Yagi K."/>
            <person name="Yamanishi H."/>
            <person name="Zabarovsky E."/>
            <person name="Zhu S."/>
            <person name="Zimmer A."/>
            <person name="Hide W."/>
            <person name="Bult C."/>
            <person name="Grimmond S.M."/>
            <person name="Teasdale R.D."/>
            <person name="Liu E.T."/>
            <person name="Brusic V."/>
            <person name="Quackenbush J."/>
            <person name="Wahlestedt C."/>
            <person name="Mattick J.S."/>
            <person name="Hume D.A."/>
            <person name="Kai C."/>
            <person name="Sasaki D."/>
            <person name="Tomaru Y."/>
            <person name="Fukuda S."/>
            <person name="Kanamori-Katayama M."/>
            <person name="Suzuki M."/>
            <person name="Aoki J."/>
            <person name="Arakawa T."/>
            <person name="Iida J."/>
            <person name="Imamura K."/>
            <person name="Itoh M."/>
            <person name="Kato T."/>
            <person name="Kawaji H."/>
            <person name="Kawagashira N."/>
            <person name="Kawashima T."/>
            <person name="Kojima M."/>
            <person name="Kondo S."/>
            <person name="Konno H."/>
            <person name="Nakano K."/>
            <person name="Ninomiya N."/>
            <person name="Nishio T."/>
            <person name="Okada M."/>
            <person name="Plessy C."/>
            <person name="Shibata K."/>
            <person name="Shiraki T."/>
            <person name="Suzuki S."/>
            <person name="Tagami M."/>
            <person name="Waki K."/>
            <person name="Watahiki A."/>
            <person name="Okamura-Oho Y."/>
            <person name="Suzuki H."/>
            <person name="Kawai J."/>
            <person name="Hayashizaki Y."/>
        </authorList>
    </citation>
    <scope>NUCLEOTIDE SEQUENCE [LARGE SCALE MRNA]</scope>
    <source>
        <strain>C57BL/6J</strain>
        <tissue>Brain cortex</tissue>
    </source>
</reference>
<reference key="2">
    <citation type="journal article" date="2004" name="Genome Res.">
        <title>The status, quality, and expansion of the NIH full-length cDNA project: the Mammalian Gene Collection (MGC).</title>
        <authorList>
            <consortium name="The MGC Project Team"/>
        </authorList>
    </citation>
    <scope>NUCLEOTIDE SEQUENCE [LARGE SCALE MRNA]</scope>
    <source>
        <tissue>Brain</tissue>
    </source>
</reference>
<reference key="3">
    <citation type="journal article" date="2010" name="Cell">
        <title>A tissue-specific atlas of mouse protein phosphorylation and expression.</title>
        <authorList>
            <person name="Huttlin E.L."/>
            <person name="Jedrychowski M.P."/>
            <person name="Elias J.E."/>
            <person name="Goswami T."/>
            <person name="Rad R."/>
            <person name="Beausoleil S.A."/>
            <person name="Villen J."/>
            <person name="Haas W."/>
            <person name="Sowa M.E."/>
            <person name="Gygi S.P."/>
        </authorList>
    </citation>
    <scope>PHOSPHORYLATION [LARGE SCALE ANALYSIS] AT SER-177</scope>
    <scope>IDENTIFICATION BY MASS SPECTROMETRY [LARGE SCALE ANALYSIS]</scope>
    <source>
        <tissue>Brain</tissue>
    </source>
</reference>
<reference key="4">
    <citation type="journal article" date="2016" name="Science">
        <title>Identification of an elaborate complex mediating postsynaptic inhibition.</title>
        <authorList>
            <person name="Uezu A."/>
            <person name="Kanak D.J."/>
            <person name="Bradshaw T.W."/>
            <person name="Soderblom E.J."/>
            <person name="Catavero C.M."/>
            <person name="Burette A.C."/>
            <person name="Weinberg R.J."/>
            <person name="Soderling S.H."/>
        </authorList>
    </citation>
    <scope>SUBCELLULAR LOCATION</scope>
    <scope>INTERACTION WITH GPHN</scope>
    <scope>FUNCTION</scope>
</reference>
<keyword id="KW-0175">Coiled coil</keyword>
<keyword id="KW-0597">Phosphoprotein</keyword>
<keyword id="KW-1185">Reference proteome</keyword>
<keyword id="KW-0770">Synapse</keyword>
<evidence type="ECO:0000255" key="1"/>
<evidence type="ECO:0000256" key="2">
    <source>
        <dbReference type="SAM" id="MobiDB-lite"/>
    </source>
</evidence>
<evidence type="ECO:0000269" key="3">
    <source>
    </source>
</evidence>
<evidence type="ECO:0000303" key="4">
    <source>
    </source>
</evidence>
<evidence type="ECO:0000305" key="5"/>
<evidence type="ECO:0000312" key="6">
    <source>
        <dbReference type="MGI" id="MGI:3605068"/>
    </source>
</evidence>
<evidence type="ECO:0007744" key="7">
    <source>
    </source>
</evidence>
<sequence>MVSKDSGRCILTTPEREVEPAACLALEMRYALDPNRQIKKRNKALQVRFKDICEAQNEQRDTQLSSGPLGEKREAKAVSCRVAYRKYMTVPARRSIPNVTKSTGVQTSPDLRKCYQTFPLDRKKGSLKGLPAADAFKSQNNGFLADSKEKSEAGPMEEPRPCSAGRIHKTTALVFHSNEHVNALGQPSGVNCAELCKSPDVLGYPEAVLQNSRPPSEEPIHQLQGRAKLDRGTLDSEEPAPLTHGRVFKTEVATVYPPAISTRAPEPGLSNSAAASQWSLCPADEEQRRAAHLNGLQASTGSAVACSTPVQYLSPECSEQPLQNQPSPTAGIGDEEHQQIVPHTEVVDLKAQLQVMENLISSSQETIKVLLGVIQELEKGEAHREGLSYRTGQDTANCDTCRNSACIIYRYVNILFPLCYSE</sequence>